<keyword id="KW-0030">Aminoacyl-tRNA synthetase</keyword>
<keyword id="KW-0067">ATP-binding</keyword>
<keyword id="KW-0963">Cytoplasm</keyword>
<keyword id="KW-0436">Ligase</keyword>
<keyword id="KW-0547">Nucleotide-binding</keyword>
<keyword id="KW-0648">Protein biosynthesis</keyword>
<sequence>MFRSHTCGELRLSDAGKSVTLAGWVQRARKMGGMTFVDLRDRYGITQLVFNEAVNAELCERANHLGREFVIQITGEVNERSNKNMNIPTGEIEIIVSVLNVLNSAVTPPFTIEDNSDGGDDIRMKFRYLDLRRNCVRKNLELRHKMTMEVRRYLDSKGFLEVETPMLVGSTPEGARDFVVPSRMNPGQFYALPQSPQTLKQLLMVSGFDRYFQIVKCFRDEDLRADRQPEFTQIDCEMSFVEQEDIISTFEGMAKHLFKELRGVELSEPFLRMTWADAIKYYGSDKPDLRFGMKFVELMDIMKGHGFSVFDDAAYIGGICAEGAASYTRKQLDQLTEFVKKPQIGAKGMVYARVEADGNVKSSVDKFYSQEVLQQMKEAFSAKPGDLILILSGPDAMKTRKQLCELRLEVGRQLGLRDKNKFACLWVVDFPMFEWSEEEGRLMAMHHPFTHPKEEDIPLLDTDPAAVRADAYDMVVNGVEVGGGSIRIHDSQLQAKMFEILGFTPERAQEQFGFLMNAFKYGAPPHGGLAYGLDRWVSLFAGLDSIRDCIAFPKNNSGRDVMLDAPAALDQSQLDELNLVVDIKEDK</sequence>
<proteinExistence type="inferred from homology"/>
<feature type="chain" id="PRO_1000006637" description="Aspartate--tRNA ligase">
    <location>
        <begin position="1"/>
        <end position="587"/>
    </location>
</feature>
<feature type="region of interest" description="Aspartate" evidence="1">
    <location>
        <begin position="197"/>
        <end position="200"/>
    </location>
</feature>
<feature type="binding site" evidence="1">
    <location>
        <position position="173"/>
    </location>
    <ligand>
        <name>L-aspartate</name>
        <dbReference type="ChEBI" id="CHEBI:29991"/>
    </ligand>
</feature>
<feature type="binding site" evidence="1">
    <location>
        <begin position="219"/>
        <end position="221"/>
    </location>
    <ligand>
        <name>ATP</name>
        <dbReference type="ChEBI" id="CHEBI:30616"/>
    </ligand>
</feature>
<feature type="binding site" evidence="1">
    <location>
        <position position="219"/>
    </location>
    <ligand>
        <name>L-aspartate</name>
        <dbReference type="ChEBI" id="CHEBI:29991"/>
    </ligand>
</feature>
<feature type="binding site" evidence="1">
    <location>
        <position position="228"/>
    </location>
    <ligand>
        <name>ATP</name>
        <dbReference type="ChEBI" id="CHEBI:30616"/>
    </ligand>
</feature>
<feature type="binding site" evidence="1">
    <location>
        <position position="446"/>
    </location>
    <ligand>
        <name>L-aspartate</name>
        <dbReference type="ChEBI" id="CHEBI:29991"/>
    </ligand>
</feature>
<feature type="binding site" evidence="1">
    <location>
        <position position="480"/>
    </location>
    <ligand>
        <name>ATP</name>
        <dbReference type="ChEBI" id="CHEBI:30616"/>
    </ligand>
</feature>
<feature type="binding site" evidence="1">
    <location>
        <position position="487"/>
    </location>
    <ligand>
        <name>L-aspartate</name>
        <dbReference type="ChEBI" id="CHEBI:29991"/>
    </ligand>
</feature>
<feature type="binding site" evidence="1">
    <location>
        <begin position="532"/>
        <end position="535"/>
    </location>
    <ligand>
        <name>ATP</name>
        <dbReference type="ChEBI" id="CHEBI:30616"/>
    </ligand>
</feature>
<reference key="1">
    <citation type="journal article" date="2007" name="PLoS Biol.">
        <title>Evolution of symbiotic bacteria in the distal human intestine.</title>
        <authorList>
            <person name="Xu J."/>
            <person name="Mahowald M.A."/>
            <person name="Ley R.E."/>
            <person name="Lozupone C.A."/>
            <person name="Hamady M."/>
            <person name="Martens E.C."/>
            <person name="Henrissat B."/>
            <person name="Coutinho P.M."/>
            <person name="Minx P."/>
            <person name="Latreille P."/>
            <person name="Cordum H."/>
            <person name="Van Brunt A."/>
            <person name="Kim K."/>
            <person name="Fulton R.S."/>
            <person name="Fulton L.A."/>
            <person name="Clifton S.W."/>
            <person name="Wilson R.K."/>
            <person name="Knight R.D."/>
            <person name="Gordon J.I."/>
        </authorList>
    </citation>
    <scope>NUCLEOTIDE SEQUENCE [LARGE SCALE GENOMIC DNA]</scope>
    <source>
        <strain>ATCC 8482 / DSM 1447 / JCM 5826 / CCUG 4940 / NBRC 14291 / NCTC 11154</strain>
    </source>
</reference>
<comment type="function">
    <text evidence="1">Catalyzes the attachment of L-aspartate to tRNA(Asp) in a two-step reaction: L-aspartate is first activated by ATP to form Asp-AMP and then transferred to the acceptor end of tRNA(Asp).</text>
</comment>
<comment type="catalytic activity">
    <reaction evidence="1">
        <text>tRNA(Asp) + L-aspartate + ATP = L-aspartyl-tRNA(Asp) + AMP + diphosphate</text>
        <dbReference type="Rhea" id="RHEA:19649"/>
        <dbReference type="Rhea" id="RHEA-COMP:9660"/>
        <dbReference type="Rhea" id="RHEA-COMP:9678"/>
        <dbReference type="ChEBI" id="CHEBI:29991"/>
        <dbReference type="ChEBI" id="CHEBI:30616"/>
        <dbReference type="ChEBI" id="CHEBI:33019"/>
        <dbReference type="ChEBI" id="CHEBI:78442"/>
        <dbReference type="ChEBI" id="CHEBI:78516"/>
        <dbReference type="ChEBI" id="CHEBI:456215"/>
        <dbReference type="EC" id="6.1.1.12"/>
    </reaction>
</comment>
<comment type="subunit">
    <text evidence="1">Homodimer.</text>
</comment>
<comment type="subcellular location">
    <subcellularLocation>
        <location evidence="1">Cytoplasm</location>
    </subcellularLocation>
</comment>
<comment type="similarity">
    <text evidence="1">Belongs to the class-II aminoacyl-tRNA synthetase family. Type 1 subfamily.</text>
</comment>
<organism>
    <name type="scientific">Phocaeicola vulgatus (strain ATCC 8482 / DSM 1447 / JCM 5826 / CCUG 4940 / NBRC 14291 / NCTC 11154)</name>
    <name type="common">Bacteroides vulgatus</name>
    <dbReference type="NCBI Taxonomy" id="435590"/>
    <lineage>
        <taxon>Bacteria</taxon>
        <taxon>Pseudomonadati</taxon>
        <taxon>Bacteroidota</taxon>
        <taxon>Bacteroidia</taxon>
        <taxon>Bacteroidales</taxon>
        <taxon>Bacteroidaceae</taxon>
        <taxon>Phocaeicola</taxon>
    </lineage>
</organism>
<accession>A6L585</accession>
<dbReference type="EC" id="6.1.1.12" evidence="1"/>
<dbReference type="EMBL" id="CP000139">
    <property type="protein sequence ID" value="ABR40849.1"/>
    <property type="molecule type" value="Genomic_DNA"/>
</dbReference>
<dbReference type="RefSeq" id="WP_012055606.1">
    <property type="nucleotide sequence ID" value="NC_009614.1"/>
</dbReference>
<dbReference type="SMR" id="A6L585"/>
<dbReference type="STRING" id="435590.BVU_3220"/>
<dbReference type="PaxDb" id="435590-BVU_3220"/>
<dbReference type="GeneID" id="5304181"/>
<dbReference type="KEGG" id="bvu:BVU_3220"/>
<dbReference type="PATRIC" id="fig|435590.9.peg.3315"/>
<dbReference type="eggNOG" id="COG0173">
    <property type="taxonomic scope" value="Bacteria"/>
</dbReference>
<dbReference type="HOGENOM" id="CLU_014330_3_2_10"/>
<dbReference type="BioCyc" id="BVUL435590:G1G59-3342-MONOMER"/>
<dbReference type="Proteomes" id="UP000002861">
    <property type="component" value="Chromosome"/>
</dbReference>
<dbReference type="GO" id="GO:0005737">
    <property type="term" value="C:cytoplasm"/>
    <property type="evidence" value="ECO:0007669"/>
    <property type="project" value="UniProtKB-SubCell"/>
</dbReference>
<dbReference type="GO" id="GO:0004815">
    <property type="term" value="F:aspartate-tRNA ligase activity"/>
    <property type="evidence" value="ECO:0007669"/>
    <property type="project" value="UniProtKB-UniRule"/>
</dbReference>
<dbReference type="GO" id="GO:0005524">
    <property type="term" value="F:ATP binding"/>
    <property type="evidence" value="ECO:0007669"/>
    <property type="project" value="UniProtKB-UniRule"/>
</dbReference>
<dbReference type="GO" id="GO:0003676">
    <property type="term" value="F:nucleic acid binding"/>
    <property type="evidence" value="ECO:0007669"/>
    <property type="project" value="InterPro"/>
</dbReference>
<dbReference type="GO" id="GO:0006422">
    <property type="term" value="P:aspartyl-tRNA aminoacylation"/>
    <property type="evidence" value="ECO:0007669"/>
    <property type="project" value="UniProtKB-UniRule"/>
</dbReference>
<dbReference type="CDD" id="cd00777">
    <property type="entry name" value="AspRS_core"/>
    <property type="match status" value="1"/>
</dbReference>
<dbReference type="CDD" id="cd04317">
    <property type="entry name" value="EcAspRS_like_N"/>
    <property type="match status" value="1"/>
</dbReference>
<dbReference type="Gene3D" id="3.30.930.10">
    <property type="entry name" value="Bira Bifunctional Protein, Domain 2"/>
    <property type="match status" value="1"/>
</dbReference>
<dbReference type="Gene3D" id="3.30.1360.30">
    <property type="entry name" value="GAD-like domain"/>
    <property type="match status" value="1"/>
</dbReference>
<dbReference type="Gene3D" id="2.40.50.140">
    <property type="entry name" value="Nucleic acid-binding proteins"/>
    <property type="match status" value="1"/>
</dbReference>
<dbReference type="HAMAP" id="MF_00044">
    <property type="entry name" value="Asp_tRNA_synth_type1"/>
    <property type="match status" value="1"/>
</dbReference>
<dbReference type="InterPro" id="IPR004364">
    <property type="entry name" value="Aa-tRNA-synt_II"/>
</dbReference>
<dbReference type="InterPro" id="IPR006195">
    <property type="entry name" value="aa-tRNA-synth_II"/>
</dbReference>
<dbReference type="InterPro" id="IPR045864">
    <property type="entry name" value="aa-tRNA-synth_II/BPL/LPL"/>
</dbReference>
<dbReference type="InterPro" id="IPR004524">
    <property type="entry name" value="Asp-tRNA-ligase_1"/>
</dbReference>
<dbReference type="InterPro" id="IPR047089">
    <property type="entry name" value="Asp-tRNA-ligase_1_N"/>
</dbReference>
<dbReference type="InterPro" id="IPR002312">
    <property type="entry name" value="Asp/Asn-tRNA-synth_IIb"/>
</dbReference>
<dbReference type="InterPro" id="IPR047090">
    <property type="entry name" value="AspRS_core"/>
</dbReference>
<dbReference type="InterPro" id="IPR004115">
    <property type="entry name" value="GAD-like_sf"/>
</dbReference>
<dbReference type="InterPro" id="IPR029351">
    <property type="entry name" value="GAD_dom"/>
</dbReference>
<dbReference type="InterPro" id="IPR012340">
    <property type="entry name" value="NA-bd_OB-fold"/>
</dbReference>
<dbReference type="InterPro" id="IPR004365">
    <property type="entry name" value="NA-bd_OB_tRNA"/>
</dbReference>
<dbReference type="NCBIfam" id="TIGR00459">
    <property type="entry name" value="aspS_bact"/>
    <property type="match status" value="1"/>
</dbReference>
<dbReference type="NCBIfam" id="NF001750">
    <property type="entry name" value="PRK00476.1"/>
    <property type="match status" value="1"/>
</dbReference>
<dbReference type="PANTHER" id="PTHR22594:SF5">
    <property type="entry name" value="ASPARTATE--TRNA LIGASE, MITOCHONDRIAL"/>
    <property type="match status" value="1"/>
</dbReference>
<dbReference type="PANTHER" id="PTHR22594">
    <property type="entry name" value="ASPARTYL/LYSYL-TRNA SYNTHETASE"/>
    <property type="match status" value="1"/>
</dbReference>
<dbReference type="Pfam" id="PF02938">
    <property type="entry name" value="GAD"/>
    <property type="match status" value="1"/>
</dbReference>
<dbReference type="Pfam" id="PF00152">
    <property type="entry name" value="tRNA-synt_2"/>
    <property type="match status" value="1"/>
</dbReference>
<dbReference type="Pfam" id="PF01336">
    <property type="entry name" value="tRNA_anti-codon"/>
    <property type="match status" value="1"/>
</dbReference>
<dbReference type="PRINTS" id="PR01042">
    <property type="entry name" value="TRNASYNTHASP"/>
</dbReference>
<dbReference type="SUPFAM" id="SSF55681">
    <property type="entry name" value="Class II aaRS and biotin synthetases"/>
    <property type="match status" value="1"/>
</dbReference>
<dbReference type="SUPFAM" id="SSF55261">
    <property type="entry name" value="GAD domain-like"/>
    <property type="match status" value="1"/>
</dbReference>
<dbReference type="SUPFAM" id="SSF50249">
    <property type="entry name" value="Nucleic acid-binding proteins"/>
    <property type="match status" value="1"/>
</dbReference>
<dbReference type="PROSITE" id="PS50862">
    <property type="entry name" value="AA_TRNA_LIGASE_II"/>
    <property type="match status" value="1"/>
</dbReference>
<name>SYD_PHOV8</name>
<evidence type="ECO:0000255" key="1">
    <source>
        <dbReference type="HAMAP-Rule" id="MF_00044"/>
    </source>
</evidence>
<protein>
    <recommendedName>
        <fullName evidence="1">Aspartate--tRNA ligase</fullName>
        <ecNumber evidence="1">6.1.1.12</ecNumber>
    </recommendedName>
    <alternativeName>
        <fullName evidence="1">Aspartyl-tRNA synthetase</fullName>
        <shortName evidence="1">AspRS</shortName>
    </alternativeName>
</protein>
<gene>
    <name evidence="1" type="primary">aspS</name>
    <name type="ordered locus">BVU_3220</name>
</gene>